<sequence length="47" mass="5170">MQVYCNVLCRCGRGADVLRDRVGPRTKRANQASPPVGRHSSRLMCPG</sequence>
<gene>
    <name evidence="4" type="ordered locus">YBR126W-B</name>
</gene>
<organism>
    <name type="scientific">Saccharomyces cerevisiae (strain ATCC 204508 / S288c)</name>
    <name type="common">Baker's yeast</name>
    <dbReference type="NCBI Taxonomy" id="559292"/>
    <lineage>
        <taxon>Eukaryota</taxon>
        <taxon>Fungi</taxon>
        <taxon>Dikarya</taxon>
        <taxon>Ascomycota</taxon>
        <taxon>Saccharomycotina</taxon>
        <taxon>Saccharomycetes</taxon>
        <taxon>Saccharomycetales</taxon>
        <taxon>Saccharomycetaceae</taxon>
        <taxon>Saccharomyces</taxon>
    </lineage>
</organism>
<comment type="miscellaneous">
    <text evidence="2">Partially overlaps YBR126W-A.</text>
</comment>
<comment type="caution">
    <text evidence="3">Product of a dubious gene prediction unlikely to encode a functional protein. Because of that it is not part of the S.cerevisiae S288c complete/reference proteome set.</text>
</comment>
<proteinExistence type="uncertain"/>
<reference key="1">
    <citation type="journal article" date="1994" name="EMBO J.">
        <title>Complete DNA sequence of yeast chromosome II.</title>
        <authorList>
            <person name="Feldmann H."/>
            <person name="Aigle M."/>
            <person name="Aljinovic G."/>
            <person name="Andre B."/>
            <person name="Baclet M.C."/>
            <person name="Barthe C."/>
            <person name="Baur A."/>
            <person name="Becam A.-M."/>
            <person name="Biteau N."/>
            <person name="Boles E."/>
            <person name="Brandt T."/>
            <person name="Brendel M."/>
            <person name="Brueckner M."/>
            <person name="Bussereau F."/>
            <person name="Christiansen C."/>
            <person name="Contreras R."/>
            <person name="Crouzet M."/>
            <person name="Cziepluch C."/>
            <person name="Demolis N."/>
            <person name="Delaveau T."/>
            <person name="Doignon F."/>
            <person name="Domdey H."/>
            <person name="Duesterhus S."/>
            <person name="Dubois E."/>
            <person name="Dujon B."/>
            <person name="El Bakkoury M."/>
            <person name="Entian K.-D."/>
            <person name="Feuermann M."/>
            <person name="Fiers W."/>
            <person name="Fobo G.M."/>
            <person name="Fritz C."/>
            <person name="Gassenhuber J."/>
            <person name="Glansdorff N."/>
            <person name="Goffeau A."/>
            <person name="Grivell L.A."/>
            <person name="de Haan M."/>
            <person name="Hein C."/>
            <person name="Herbert C.J."/>
            <person name="Hollenberg C.P."/>
            <person name="Holmstroem K."/>
            <person name="Jacq C."/>
            <person name="Jacquet M."/>
            <person name="Jauniaux J.-C."/>
            <person name="Jonniaux J.-L."/>
            <person name="Kallesoee T."/>
            <person name="Kiesau P."/>
            <person name="Kirchrath L."/>
            <person name="Koetter P."/>
            <person name="Korol S."/>
            <person name="Liebl S."/>
            <person name="Logghe M."/>
            <person name="Lohan A.J.E."/>
            <person name="Louis E.J."/>
            <person name="Li Z.Y."/>
            <person name="Maat M.J."/>
            <person name="Mallet L."/>
            <person name="Mannhaupt G."/>
            <person name="Messenguy F."/>
            <person name="Miosga T."/>
            <person name="Molemans F."/>
            <person name="Mueller S."/>
            <person name="Nasr F."/>
            <person name="Obermaier B."/>
            <person name="Perea J."/>
            <person name="Pierard A."/>
            <person name="Piravandi E."/>
            <person name="Pohl F.M."/>
            <person name="Pohl T.M."/>
            <person name="Potier S."/>
            <person name="Proft M."/>
            <person name="Purnelle B."/>
            <person name="Ramezani Rad M."/>
            <person name="Rieger M."/>
            <person name="Rose M."/>
            <person name="Schaaff-Gerstenschlaeger I."/>
            <person name="Scherens B."/>
            <person name="Schwarzlose C."/>
            <person name="Skala J."/>
            <person name="Slonimski P.P."/>
            <person name="Smits P.H.M."/>
            <person name="Souciet J.-L."/>
            <person name="Steensma H.Y."/>
            <person name="Stucka R."/>
            <person name="Urrestarazu L.A."/>
            <person name="van der Aart Q.J.M."/>
            <person name="Van Dyck L."/>
            <person name="Vassarotti A."/>
            <person name="Vetter I."/>
            <person name="Vierendeels F."/>
            <person name="Vissers S."/>
            <person name="Wagner G."/>
            <person name="de Wergifosse P."/>
            <person name="Wolfe K.H."/>
            <person name="Zagulski M."/>
            <person name="Zimmermann F.K."/>
            <person name="Mewes H.-W."/>
            <person name="Kleine K."/>
        </authorList>
    </citation>
    <scope>NUCLEOTIDE SEQUENCE [LARGE SCALE GENOMIC DNA]</scope>
    <source>
        <strain>ATCC 204508 / S288c</strain>
    </source>
</reference>
<reference key="2">
    <citation type="journal article" date="2014" name="G3 (Bethesda)">
        <title>The reference genome sequence of Saccharomyces cerevisiae: Then and now.</title>
        <authorList>
            <person name="Engel S.R."/>
            <person name="Dietrich F.S."/>
            <person name="Fisk D.G."/>
            <person name="Binkley G."/>
            <person name="Balakrishnan R."/>
            <person name="Costanzo M.C."/>
            <person name="Dwight S.S."/>
            <person name="Hitz B.C."/>
            <person name="Karra K."/>
            <person name="Nash R.S."/>
            <person name="Weng S."/>
            <person name="Wong E.D."/>
            <person name="Lloyd P."/>
            <person name="Skrzypek M.S."/>
            <person name="Miyasato S.R."/>
            <person name="Simison M."/>
            <person name="Cherry J.M."/>
        </authorList>
    </citation>
    <scope>GENOME REANNOTATION</scope>
    <source>
        <strain>ATCC 204508 / S288c</strain>
    </source>
</reference>
<reference key="3">
    <citation type="journal article" date="2006" name="Proc. Natl. Acad. Sci. U.S.A.">
        <title>A large-scale full-length cDNA analysis to explore the budding yeast transcriptome.</title>
        <authorList>
            <person name="Miura F."/>
            <person name="Kawaguchi N."/>
            <person name="Sese J."/>
            <person name="Toyoda A."/>
            <person name="Hattori M."/>
            <person name="Morishita S."/>
            <person name="Ito T."/>
        </authorList>
    </citation>
    <scope>IDENTIFICATION</scope>
</reference>
<accession>A0A023PXH5</accession>
<dbReference type="EMBL" id="KJ412212">
    <property type="protein sequence ID" value="AHX39255.1"/>
    <property type="molecule type" value="Genomic_DNA"/>
</dbReference>
<dbReference type="STRING" id="4932.YBR126W-B"/>
<dbReference type="PaxDb" id="4932-YBR126W-B"/>
<dbReference type="EnsemblFungi" id="YBR126W-B_mRNA">
    <property type="protein sequence ID" value="YBR126W-B"/>
    <property type="gene ID" value="YBR126W-B"/>
</dbReference>
<dbReference type="AGR" id="SGD:S000028738"/>
<dbReference type="SGD" id="S000028738">
    <property type="gene designation" value="YBR126W-B"/>
</dbReference>
<dbReference type="HOGENOM" id="CLU_3175645_0_0_1"/>
<protein>
    <recommendedName>
        <fullName evidence="2">Putative uncharacterized protein YBR126W-B</fullName>
    </recommendedName>
</protein>
<name>YB26B_YEAST</name>
<feature type="chain" id="PRO_0000430977" description="Putative uncharacterized protein YBR126W-B">
    <location>
        <begin position="1"/>
        <end position="47"/>
    </location>
</feature>
<feature type="region of interest" description="Disordered" evidence="1">
    <location>
        <begin position="22"/>
        <end position="47"/>
    </location>
</feature>
<evidence type="ECO:0000256" key="1">
    <source>
        <dbReference type="SAM" id="MobiDB-lite"/>
    </source>
</evidence>
<evidence type="ECO:0000305" key="2"/>
<evidence type="ECO:0000305" key="3">
    <source>
    </source>
</evidence>
<evidence type="ECO:0000312" key="4">
    <source>
        <dbReference type="SGD" id="S000028738"/>
    </source>
</evidence>